<organism>
    <name type="scientific">Methylococcus capsulatus (strain ATCC 33009 / NCIMB 11132 / Bath)</name>
    <dbReference type="NCBI Taxonomy" id="243233"/>
    <lineage>
        <taxon>Bacteria</taxon>
        <taxon>Pseudomonadati</taxon>
        <taxon>Pseudomonadota</taxon>
        <taxon>Gammaproteobacteria</taxon>
        <taxon>Methylococcales</taxon>
        <taxon>Methylococcaceae</taxon>
        <taxon>Methylococcus</taxon>
    </lineage>
</organism>
<gene>
    <name evidence="1" type="primary">gltX1</name>
    <name type="synonym">gltX-1</name>
    <name type="ordered locus">MCA0510</name>
</gene>
<reference key="1">
    <citation type="journal article" date="2004" name="PLoS Biol.">
        <title>Genomic insights into methanotrophy: the complete genome sequence of Methylococcus capsulatus (Bath).</title>
        <authorList>
            <person name="Ward N.L."/>
            <person name="Larsen O."/>
            <person name="Sakwa J."/>
            <person name="Bruseth L."/>
            <person name="Khouri H.M."/>
            <person name="Durkin A.S."/>
            <person name="Dimitrov G."/>
            <person name="Jiang L."/>
            <person name="Scanlan D."/>
            <person name="Kang K.H."/>
            <person name="Lewis M.R."/>
            <person name="Nelson K.E."/>
            <person name="Methe B.A."/>
            <person name="Wu M."/>
            <person name="Heidelberg J.F."/>
            <person name="Paulsen I.T."/>
            <person name="Fouts D.E."/>
            <person name="Ravel J."/>
            <person name="Tettelin H."/>
            <person name="Ren Q."/>
            <person name="Read T.D."/>
            <person name="DeBoy R.T."/>
            <person name="Seshadri R."/>
            <person name="Salzberg S.L."/>
            <person name="Jensen H.B."/>
            <person name="Birkeland N.K."/>
            <person name="Nelson W.C."/>
            <person name="Dodson R.J."/>
            <person name="Grindhaug S.H."/>
            <person name="Holt I.E."/>
            <person name="Eidhammer I."/>
            <person name="Jonasen I."/>
            <person name="Vanaken S."/>
            <person name="Utterback T.R."/>
            <person name="Feldblyum T.V."/>
            <person name="Fraser C.M."/>
            <person name="Lillehaug J.R."/>
            <person name="Eisen J.A."/>
        </authorList>
    </citation>
    <scope>NUCLEOTIDE SEQUENCE [LARGE SCALE GENOMIC DNA]</scope>
    <source>
        <strain>ATCC 33009 / NCIMB 11132 / Bath</strain>
    </source>
</reference>
<name>SYE1_METCA</name>
<sequence length="466" mass="52121">MSAIKTRFAPSPTGLIHLGNARTALFSALGGDVFVLRIEDTDLERSRAEFVAELMNDLRWLGLDWQEGPRGAEPDPDWYQSRRGEIYATYYRLLEEKGLAYPCFCTPLELEVSRKVQLGSGRPPRYSGRCAHLPADEVRRRHEEGLAATLRFRVPKDRVVEFEDEVRGPQRFAGEDIGDFIIRRADGSPAFFFCNAIDDALMGITRVLRGEDHLANTPRQLMILAALDLPRPRYAHISLIVGDDGAPLSKRNGSRSIKQLREEGYFPEAVVNMLARLGHHYDSAELLGLPALRAGFDIRRLGRSPARFDVSHLDHWQGLAVRGAADDTLWHWLHTETRAVVPDAHRAGFLDLVRSNCLFPKEADAWARILFTDELELAADIAAVAQAAGEAFYLAAIDAATESPDDFAAFLAGLKRRSGAKGKHLFLPLRAALTGSLDGPELAKIYQMLDKPRLHRRLAEFTYESE</sequence>
<keyword id="KW-0030">Aminoacyl-tRNA synthetase</keyword>
<keyword id="KW-0067">ATP-binding</keyword>
<keyword id="KW-0963">Cytoplasm</keyword>
<keyword id="KW-0436">Ligase</keyword>
<keyword id="KW-0479">Metal-binding</keyword>
<keyword id="KW-0547">Nucleotide-binding</keyword>
<keyword id="KW-0648">Protein biosynthesis</keyword>
<keyword id="KW-1185">Reference proteome</keyword>
<keyword id="KW-0862">Zinc</keyword>
<comment type="function">
    <text evidence="1">Catalyzes the attachment of glutamate to tRNA(Glu) in a two-step reaction: glutamate is first activated by ATP to form Glu-AMP and then transferred to the acceptor end of tRNA(Glu).</text>
</comment>
<comment type="catalytic activity">
    <reaction evidence="1">
        <text>tRNA(Glu) + L-glutamate + ATP = L-glutamyl-tRNA(Glu) + AMP + diphosphate</text>
        <dbReference type="Rhea" id="RHEA:23540"/>
        <dbReference type="Rhea" id="RHEA-COMP:9663"/>
        <dbReference type="Rhea" id="RHEA-COMP:9680"/>
        <dbReference type="ChEBI" id="CHEBI:29985"/>
        <dbReference type="ChEBI" id="CHEBI:30616"/>
        <dbReference type="ChEBI" id="CHEBI:33019"/>
        <dbReference type="ChEBI" id="CHEBI:78442"/>
        <dbReference type="ChEBI" id="CHEBI:78520"/>
        <dbReference type="ChEBI" id="CHEBI:456215"/>
        <dbReference type="EC" id="6.1.1.17"/>
    </reaction>
</comment>
<comment type="cofactor">
    <cofactor evidence="1">
        <name>Zn(2+)</name>
        <dbReference type="ChEBI" id="CHEBI:29105"/>
    </cofactor>
    <text evidence="1">Binds 1 zinc ion per subunit.</text>
</comment>
<comment type="subunit">
    <text evidence="1">Monomer.</text>
</comment>
<comment type="subcellular location">
    <subcellularLocation>
        <location evidence="1">Cytoplasm</location>
    </subcellularLocation>
</comment>
<comment type="similarity">
    <text evidence="1">Belongs to the class-I aminoacyl-tRNA synthetase family. Glutamate--tRNA ligase type 1 subfamily.</text>
</comment>
<dbReference type="EC" id="6.1.1.17" evidence="1"/>
<dbReference type="EMBL" id="AE017282">
    <property type="protein sequence ID" value="AAU93301.1"/>
    <property type="molecule type" value="Genomic_DNA"/>
</dbReference>
<dbReference type="RefSeq" id="WP_010959858.1">
    <property type="nucleotide sequence ID" value="NC_002977.6"/>
</dbReference>
<dbReference type="SMR" id="Q60BG7"/>
<dbReference type="STRING" id="243233.MCA0510"/>
<dbReference type="GeneID" id="88222840"/>
<dbReference type="KEGG" id="mca:MCA0510"/>
<dbReference type="eggNOG" id="COG0008">
    <property type="taxonomic scope" value="Bacteria"/>
</dbReference>
<dbReference type="HOGENOM" id="CLU_015768_6_3_6"/>
<dbReference type="Proteomes" id="UP000006821">
    <property type="component" value="Chromosome"/>
</dbReference>
<dbReference type="GO" id="GO:0005829">
    <property type="term" value="C:cytosol"/>
    <property type="evidence" value="ECO:0007669"/>
    <property type="project" value="TreeGrafter"/>
</dbReference>
<dbReference type="GO" id="GO:0005524">
    <property type="term" value="F:ATP binding"/>
    <property type="evidence" value="ECO:0007669"/>
    <property type="project" value="UniProtKB-UniRule"/>
</dbReference>
<dbReference type="GO" id="GO:0004818">
    <property type="term" value="F:glutamate-tRNA ligase activity"/>
    <property type="evidence" value="ECO:0007669"/>
    <property type="project" value="UniProtKB-UniRule"/>
</dbReference>
<dbReference type="GO" id="GO:0000049">
    <property type="term" value="F:tRNA binding"/>
    <property type="evidence" value="ECO:0007669"/>
    <property type="project" value="InterPro"/>
</dbReference>
<dbReference type="GO" id="GO:0008270">
    <property type="term" value="F:zinc ion binding"/>
    <property type="evidence" value="ECO:0007669"/>
    <property type="project" value="UniProtKB-UniRule"/>
</dbReference>
<dbReference type="GO" id="GO:0006424">
    <property type="term" value="P:glutamyl-tRNA aminoacylation"/>
    <property type="evidence" value="ECO:0007669"/>
    <property type="project" value="UniProtKB-UniRule"/>
</dbReference>
<dbReference type="Gene3D" id="1.10.10.350">
    <property type="match status" value="1"/>
</dbReference>
<dbReference type="Gene3D" id="3.40.50.620">
    <property type="entry name" value="HUPs"/>
    <property type="match status" value="1"/>
</dbReference>
<dbReference type="HAMAP" id="MF_00022">
    <property type="entry name" value="Glu_tRNA_synth_type1"/>
    <property type="match status" value="1"/>
</dbReference>
<dbReference type="InterPro" id="IPR045462">
    <property type="entry name" value="aa-tRNA-synth_I_cd-bd"/>
</dbReference>
<dbReference type="InterPro" id="IPR020751">
    <property type="entry name" value="aa-tRNA-synth_I_codon-bd_sub2"/>
</dbReference>
<dbReference type="InterPro" id="IPR001412">
    <property type="entry name" value="aa-tRNA-synth_I_CS"/>
</dbReference>
<dbReference type="InterPro" id="IPR008925">
    <property type="entry name" value="aa_tRNA-synth_I_cd-bd_sf"/>
</dbReference>
<dbReference type="InterPro" id="IPR004527">
    <property type="entry name" value="Glu-tRNA-ligase_bac/mito"/>
</dbReference>
<dbReference type="InterPro" id="IPR000924">
    <property type="entry name" value="Glu/Gln-tRNA-synth"/>
</dbReference>
<dbReference type="InterPro" id="IPR020058">
    <property type="entry name" value="Glu/Gln-tRNA-synth_Ib_cat-dom"/>
</dbReference>
<dbReference type="InterPro" id="IPR049940">
    <property type="entry name" value="GluQ/Sye"/>
</dbReference>
<dbReference type="InterPro" id="IPR014729">
    <property type="entry name" value="Rossmann-like_a/b/a_fold"/>
</dbReference>
<dbReference type="NCBIfam" id="TIGR00464">
    <property type="entry name" value="gltX_bact"/>
    <property type="match status" value="1"/>
</dbReference>
<dbReference type="PANTHER" id="PTHR43311">
    <property type="entry name" value="GLUTAMATE--TRNA LIGASE"/>
    <property type="match status" value="1"/>
</dbReference>
<dbReference type="PANTHER" id="PTHR43311:SF2">
    <property type="entry name" value="GLUTAMATE--TRNA LIGASE, MITOCHONDRIAL-RELATED"/>
    <property type="match status" value="1"/>
</dbReference>
<dbReference type="Pfam" id="PF19269">
    <property type="entry name" value="Anticodon_2"/>
    <property type="match status" value="1"/>
</dbReference>
<dbReference type="Pfam" id="PF00749">
    <property type="entry name" value="tRNA-synt_1c"/>
    <property type="match status" value="1"/>
</dbReference>
<dbReference type="PRINTS" id="PR00987">
    <property type="entry name" value="TRNASYNTHGLU"/>
</dbReference>
<dbReference type="SUPFAM" id="SSF48163">
    <property type="entry name" value="An anticodon-binding domain of class I aminoacyl-tRNA synthetases"/>
    <property type="match status" value="1"/>
</dbReference>
<dbReference type="SUPFAM" id="SSF52374">
    <property type="entry name" value="Nucleotidylyl transferase"/>
    <property type="match status" value="1"/>
</dbReference>
<dbReference type="PROSITE" id="PS00178">
    <property type="entry name" value="AA_TRNA_LIGASE_I"/>
    <property type="match status" value="1"/>
</dbReference>
<feature type="chain" id="PRO_0000119597" description="Glutamate--tRNA ligase 1">
    <location>
        <begin position="1"/>
        <end position="466"/>
    </location>
</feature>
<feature type="short sequence motif" description="'HIGH' region" evidence="1">
    <location>
        <begin position="10"/>
        <end position="20"/>
    </location>
</feature>
<feature type="short sequence motif" description="'KMSKS' region" evidence="1">
    <location>
        <begin position="247"/>
        <end position="251"/>
    </location>
</feature>
<feature type="binding site" evidence="1">
    <location>
        <position position="103"/>
    </location>
    <ligand>
        <name>Zn(2+)</name>
        <dbReference type="ChEBI" id="CHEBI:29105"/>
    </ligand>
</feature>
<feature type="binding site" evidence="1">
    <location>
        <position position="105"/>
    </location>
    <ligand>
        <name>Zn(2+)</name>
        <dbReference type="ChEBI" id="CHEBI:29105"/>
    </ligand>
</feature>
<feature type="binding site" evidence="1">
    <location>
        <position position="130"/>
    </location>
    <ligand>
        <name>Zn(2+)</name>
        <dbReference type="ChEBI" id="CHEBI:29105"/>
    </ligand>
</feature>
<feature type="binding site" evidence="1">
    <location>
        <position position="132"/>
    </location>
    <ligand>
        <name>Zn(2+)</name>
        <dbReference type="ChEBI" id="CHEBI:29105"/>
    </ligand>
</feature>
<feature type="binding site" evidence="1">
    <location>
        <position position="250"/>
    </location>
    <ligand>
        <name>ATP</name>
        <dbReference type="ChEBI" id="CHEBI:30616"/>
    </ligand>
</feature>
<accession>Q60BG7</accession>
<proteinExistence type="inferred from homology"/>
<protein>
    <recommendedName>
        <fullName evidence="1">Glutamate--tRNA ligase 1</fullName>
        <ecNumber evidence="1">6.1.1.17</ecNumber>
    </recommendedName>
    <alternativeName>
        <fullName evidence="1">Glutamyl-tRNA synthetase 1</fullName>
        <shortName evidence="1">GluRS 1</shortName>
    </alternativeName>
</protein>
<evidence type="ECO:0000255" key="1">
    <source>
        <dbReference type="HAMAP-Rule" id="MF_00022"/>
    </source>
</evidence>